<organism>
    <name type="scientific">Mus spretus</name>
    <name type="common">Western Mediterranean mouse</name>
    <name type="synonym">Algerian mouse</name>
    <dbReference type="NCBI Taxonomy" id="10096"/>
    <lineage>
        <taxon>Eukaryota</taxon>
        <taxon>Metazoa</taxon>
        <taxon>Chordata</taxon>
        <taxon>Craniata</taxon>
        <taxon>Vertebrata</taxon>
        <taxon>Euteleostomi</taxon>
        <taxon>Mammalia</taxon>
        <taxon>Eutheria</taxon>
        <taxon>Euarchontoglires</taxon>
        <taxon>Glires</taxon>
        <taxon>Rodentia</taxon>
        <taxon>Myomorpha</taxon>
        <taxon>Muroidea</taxon>
        <taxon>Muridae</taxon>
        <taxon>Murinae</taxon>
        <taxon>Mus</taxon>
        <taxon>Mus</taxon>
    </lineage>
</organism>
<keyword id="KW-1003">Cell membrane</keyword>
<keyword id="KW-1183">Host cell receptor for virus entry</keyword>
<keyword id="KW-0472">Membrane</keyword>
<keyword id="KW-0597">Phosphoprotein</keyword>
<keyword id="KW-0675">Receptor</keyword>
<keyword id="KW-0812">Transmembrane</keyword>
<keyword id="KW-1133">Transmembrane helix</keyword>
<sequence>MKFAEHLSAHITPEWRKQYTQYEAFKDMLYSAQDQAPSVEVTDEDTVKRYFAKFEEKFFQTCEKELAKINTFYSEKLAEAQRRFATLQNELQSSLDVQKESSGVTTLRQRRKPVFHLSHEERVQHRNIKDLKLAFSEFYLSLILLQNYQNLNFTGFRKILKKHDKILETSRGADWRVIHVEVAPFYTCKKINQLISETEAVVTNELEDGDRQKAMKRLRVPPLGAAQPAPAWTTFRVGLFCGIFIGLNITLGFAAVFKLETDRTVWPLIRIYRGGFLLIEFLFLLGINTYGWRQAGVNHVLIFELNPRNNLSHQHLFEIAGFLGILWCLSLLACFFAPISIIPIYVYPLALYGFMVFFLINPTKTFYYKSRFWLLKLLFRVFTAPFHKVGFADFWLADQLNSLSVILMDLEYMICFYSFELKWDESKGLLPNDPQEPEFCHKYSYGVRAIVQCIPAWLRFIQCLRRYRDTRRAFPHLVNAGKYSTTFFTVTFAALYSTHKEQNHSDTVVFFYLWVFFCIISSCYTLIWDLKMDWGLFDKNAGENTFLREEIVYPQKAYYYCAIIEDVILRFAWTIQISITATTFKPHVGDIIATVFAPLEVFRRFVWNFFRLENEHLDNCGEFRAVRDISVAPLNADDQTLLEQMMDQEDGVRNRQKNRSWKYNQSISLRRPRLASQSKARDTKVLIEDTDDEANT</sequence>
<gene>
    <name type="primary">Xpr1</name>
</gene>
<feature type="chain" id="PRO_0000315858" description="Solute carrier family 53 member 1">
    <location>
        <begin position="1"/>
        <end position="696"/>
    </location>
</feature>
<feature type="topological domain" description="Cytoplasmic" evidence="1">
    <location>
        <begin position="1"/>
        <end position="228"/>
    </location>
</feature>
<feature type="transmembrane region" description="Helical; Name=1" evidence="1">
    <location>
        <begin position="229"/>
        <end position="259"/>
    </location>
</feature>
<feature type="topological domain" description="Extracellular" evidence="1">
    <location>
        <begin position="260"/>
        <end position="264"/>
    </location>
</feature>
<feature type="transmembrane region" description="Helical; Name=2" evidence="1">
    <location>
        <begin position="265"/>
        <end position="296"/>
    </location>
</feature>
<feature type="topological domain" description="Cytoplasmic" evidence="1">
    <location>
        <begin position="297"/>
        <end position="309"/>
    </location>
</feature>
<feature type="transmembrane region" description="Helical; Name=3" evidence="1">
    <location>
        <begin position="310"/>
        <end position="337"/>
    </location>
</feature>
<feature type="topological domain" description="Extracellular" evidence="1">
    <location>
        <begin position="338"/>
        <end position="343"/>
    </location>
</feature>
<feature type="transmembrane region" description="Helical; Name=4" evidence="1">
    <location>
        <begin position="344"/>
        <end position="365"/>
    </location>
</feature>
<feature type="intramembrane region" description="Helical" evidence="1">
    <location>
        <begin position="366"/>
        <end position="383"/>
    </location>
</feature>
<feature type="topological domain" description="Cytoplasmic" evidence="1">
    <location>
        <begin position="384"/>
        <end position="388"/>
    </location>
</feature>
<feature type="transmembrane region" description="Discontinuously helical; Name=5" evidence="1">
    <location>
        <begin position="389"/>
        <end position="422"/>
    </location>
</feature>
<feature type="topological domain" description="Extracellular" evidence="1">
    <location>
        <begin position="423"/>
        <end position="429"/>
    </location>
</feature>
<feature type="transmembrane region" description="Discontinuously helical; Name=6" evidence="1">
    <location>
        <begin position="430"/>
        <end position="471"/>
    </location>
</feature>
<feature type="topological domain" description="Cytoplasmic" evidence="1">
    <location>
        <position position="472"/>
    </location>
</feature>
<feature type="transmembrane region" description="Helical; Name=7" evidence="1">
    <location>
        <begin position="473"/>
        <end position="503"/>
    </location>
</feature>
<feature type="topological domain" description="Extracellular" evidence="1">
    <location>
        <begin position="504"/>
        <end position="506"/>
    </location>
</feature>
<feature type="transmembrane region" description="Helical; Name=8" evidence="1">
    <location>
        <begin position="507"/>
        <end position="534"/>
    </location>
</feature>
<feature type="topological domain" description="Cytoplasmic" evidence="1">
    <location>
        <begin position="535"/>
        <end position="553"/>
    </location>
</feature>
<feature type="transmembrane region" description="Discontinuously helical; Name=9" evidence="1">
    <location>
        <begin position="554"/>
        <end position="585"/>
    </location>
</feature>
<feature type="topological domain" description="Extracellular" evidence="1">
    <location>
        <begin position="586"/>
        <end position="587"/>
    </location>
</feature>
<feature type="transmembrane region" description="Helical; Name=10" evidence="1">
    <location>
        <begin position="588"/>
        <end position="626"/>
    </location>
</feature>
<feature type="topological domain" description="Cytoplasmic" evidence="1">
    <location>
        <begin position="627"/>
        <end position="696"/>
    </location>
</feature>
<feature type="domain" description="SPX" evidence="1">
    <location>
        <begin position="2"/>
        <end position="224"/>
    </location>
</feature>
<feature type="domain" description="EXS" evidence="2">
    <location>
        <begin position="439"/>
        <end position="643"/>
    </location>
</feature>
<feature type="region of interest" description="Important for inositol polyphosphate binding" evidence="1">
    <location>
        <begin position="158"/>
        <end position="165"/>
    </location>
</feature>
<feature type="binding site" evidence="1">
    <location>
        <position position="398"/>
    </location>
    <ligand>
        <name>phosphate</name>
        <dbReference type="ChEBI" id="CHEBI:43474"/>
    </ligand>
</feature>
<feature type="binding site" evidence="1">
    <location>
        <position position="401"/>
    </location>
    <ligand>
        <name>phosphate</name>
        <dbReference type="ChEBI" id="CHEBI:43474"/>
    </ligand>
</feature>
<feature type="binding site" evidence="1">
    <location>
        <position position="482"/>
    </location>
    <ligand>
        <name>phosphate</name>
        <dbReference type="ChEBI" id="CHEBI:43474"/>
    </ligand>
</feature>
<feature type="binding site" evidence="1">
    <location>
        <position position="483"/>
    </location>
    <ligand>
        <name>phosphate</name>
        <dbReference type="ChEBI" id="CHEBI:43474"/>
    </ligand>
</feature>
<feature type="binding site" evidence="1">
    <location>
        <position position="570"/>
    </location>
    <ligand>
        <name>phosphate</name>
        <dbReference type="ChEBI" id="CHEBI:43474"/>
    </ligand>
</feature>
<feature type="binding site" evidence="1">
    <location>
        <position position="603"/>
    </location>
    <ligand>
        <name>phosphate</name>
        <dbReference type="ChEBI" id="CHEBI:43474"/>
    </ligand>
</feature>
<feature type="binding site" evidence="1">
    <location>
        <position position="604"/>
    </location>
    <ligand>
        <name>phosphate</name>
        <dbReference type="ChEBI" id="CHEBI:43474"/>
    </ligand>
</feature>
<feature type="site" description="Gating residue for phosphate transport" evidence="1">
    <location>
        <position position="573"/>
    </location>
</feature>
<feature type="modified residue" description="Phosphoserine" evidence="1">
    <location>
        <position position="668"/>
    </location>
</feature>
<feature type="modified residue" description="Phosphothreonine" evidence="1">
    <location>
        <position position="690"/>
    </location>
</feature>
<evidence type="ECO:0000250" key="1">
    <source>
        <dbReference type="UniProtKB" id="Q9UBH6"/>
    </source>
</evidence>
<evidence type="ECO:0000255" key="2">
    <source>
        <dbReference type="PROSITE-ProRule" id="PRU00712"/>
    </source>
</evidence>
<evidence type="ECO:0000269" key="3">
    <source>
    </source>
</evidence>
<evidence type="ECO:0000305" key="4"/>
<reference key="1">
    <citation type="journal article" date="1999" name="J. Virol.">
        <title>Polymorphisms of the cell surface receptor control mouse susceptibilities to xenotropic and polytropic leukemia viruses.</title>
        <authorList>
            <person name="Marin M."/>
            <person name="Tailor C.S."/>
            <person name="Nouri A."/>
            <person name="Kozak S.L."/>
            <person name="Kabat D."/>
        </authorList>
    </citation>
    <scope>NUCLEOTIDE SEQUENCE [MRNA]</scope>
    <scope>FUNCTION (MICROBIAL INFECTION)</scope>
    <source>
        <tissue>Kidney</tissue>
    </source>
</reference>
<proteinExistence type="evidence at transcript level"/>
<accession>Q9R032</accession>
<dbReference type="EMBL" id="AF131101">
    <property type="protein sequence ID" value="AAF03487.1"/>
    <property type="molecule type" value="mRNA"/>
</dbReference>
<dbReference type="SMR" id="Q9R032"/>
<dbReference type="MGI" id="MGI:97932">
    <property type="gene designation" value="Xpr1"/>
</dbReference>
<dbReference type="GO" id="GO:0005794">
    <property type="term" value="C:Golgi apparatus"/>
    <property type="evidence" value="ECO:0007669"/>
    <property type="project" value="TreeGrafter"/>
</dbReference>
<dbReference type="GO" id="GO:0005886">
    <property type="term" value="C:plasma membrane"/>
    <property type="evidence" value="ECO:0000250"/>
    <property type="project" value="UniProtKB"/>
</dbReference>
<dbReference type="GO" id="GO:0015562">
    <property type="term" value="F:efflux transmembrane transporter activity"/>
    <property type="evidence" value="ECO:0000250"/>
    <property type="project" value="UniProtKB"/>
</dbReference>
<dbReference type="GO" id="GO:0000822">
    <property type="term" value="F:inositol hexakisphosphate binding"/>
    <property type="evidence" value="ECO:0000250"/>
    <property type="project" value="UniProtKB"/>
</dbReference>
<dbReference type="GO" id="GO:0005315">
    <property type="term" value="F:phosphate transmembrane transporter activity"/>
    <property type="evidence" value="ECO:0000250"/>
    <property type="project" value="UniProtKB"/>
</dbReference>
<dbReference type="GO" id="GO:0001618">
    <property type="term" value="F:virus receptor activity"/>
    <property type="evidence" value="ECO:0007669"/>
    <property type="project" value="UniProtKB-KW"/>
</dbReference>
<dbReference type="GO" id="GO:0016036">
    <property type="term" value="P:cellular response to phosphate starvation"/>
    <property type="evidence" value="ECO:0007669"/>
    <property type="project" value="TreeGrafter"/>
</dbReference>
<dbReference type="GO" id="GO:0030643">
    <property type="term" value="P:intracellular phosphate ion homeostasis"/>
    <property type="evidence" value="ECO:0000250"/>
    <property type="project" value="UniProtKB"/>
</dbReference>
<dbReference type="GO" id="GO:0035435">
    <property type="term" value="P:phosphate ion transmembrane transport"/>
    <property type="evidence" value="ECO:0000250"/>
    <property type="project" value="UniProtKB"/>
</dbReference>
<dbReference type="CDD" id="cd14477">
    <property type="entry name" value="SPX_XPR1_like"/>
    <property type="match status" value="1"/>
</dbReference>
<dbReference type="InterPro" id="IPR004342">
    <property type="entry name" value="EXS_C"/>
</dbReference>
<dbReference type="InterPro" id="IPR004331">
    <property type="entry name" value="SPX_dom"/>
</dbReference>
<dbReference type="PANTHER" id="PTHR10783:SF103">
    <property type="entry name" value="SOLUTE CARRIER FAMILY 53 MEMBER 1"/>
    <property type="match status" value="1"/>
</dbReference>
<dbReference type="PANTHER" id="PTHR10783">
    <property type="entry name" value="XENOTROPIC AND POLYTROPIC RETROVIRUS RECEPTOR 1-RELATED"/>
    <property type="match status" value="1"/>
</dbReference>
<dbReference type="Pfam" id="PF03124">
    <property type="entry name" value="EXS"/>
    <property type="match status" value="1"/>
</dbReference>
<dbReference type="Pfam" id="PF03105">
    <property type="entry name" value="SPX"/>
    <property type="match status" value="3"/>
</dbReference>
<dbReference type="PROSITE" id="PS51380">
    <property type="entry name" value="EXS"/>
    <property type="match status" value="1"/>
</dbReference>
<dbReference type="PROSITE" id="PS51382">
    <property type="entry name" value="SPX"/>
    <property type="match status" value="1"/>
</dbReference>
<protein>
    <recommendedName>
        <fullName evidence="1">Solute carrier family 53 member 1</fullName>
    </recommendedName>
    <alternativeName>
        <fullName evidence="1">Phosphate exporter SLC53A1</fullName>
    </alternativeName>
    <alternativeName>
        <fullName>Xenotropic and polytropic retrovirus receptor 1</fullName>
    </alternativeName>
</protein>
<comment type="function">
    <text evidence="1">Inorganic ion transporter that mediates phosphate ion export across plasma membrane (By similarity). Plays a major role in phosphate homeostasis, preventing intracellular phosphate accumulation and possible calcium phosphate precipitation, ultimately preserving calcium signaling (By similarity). Binds inositol hexakisphosphate (Ins6P) and similar inositol polyphosphates, such as 5-diphospho-inositol pentakisphosphate (5-InsP7), which are important intracellular signaling molecules involved in regulation of phosphate flux (By similarity).</text>
</comment>
<comment type="function">
    <text evidence="3">(Microbial infection) Receptor for xenotropic and polytropic murine leukemia (X- and P-MLV) retroviruses.</text>
</comment>
<comment type="catalytic activity">
    <reaction evidence="1">
        <text>phosphate(in) = phosphate(out)</text>
        <dbReference type="Rhea" id="RHEA:32823"/>
        <dbReference type="ChEBI" id="CHEBI:43474"/>
    </reaction>
    <physiologicalReaction direction="left-to-right" evidence="1">
        <dbReference type="Rhea" id="RHEA:32824"/>
    </physiologicalReaction>
</comment>
<comment type="subunit">
    <text evidence="1">Homodimer.</text>
</comment>
<comment type="subcellular location">
    <subcellularLocation>
        <location evidence="1">Cell membrane</location>
        <topology evidence="1">Multi-pass membrane protein</topology>
    </subcellularLocation>
</comment>
<comment type="domain">
    <text evidence="1">The SPX domain plays a role in the regulation of phosphate flux (By similarity). Inositol hexakisphosphate (Ins6P) is bound between two SPX domains of the homodimer (By similarity). The SPX domain has high affinity for inositol polyphosphates and its affinity for inorganic phosphate is two to three orders of magnitude lower (By similarity).</text>
</comment>
<comment type="similarity">
    <text evidence="4">Belongs to the SYG1 (TC 2.A.94) family.</text>
</comment>
<name>S53A1_MUSSP</name>